<organism>
    <name type="scientific">Ignicoccus hospitalis (strain KIN4/I / DSM 18386 / JCM 14125)</name>
    <dbReference type="NCBI Taxonomy" id="453591"/>
    <lineage>
        <taxon>Archaea</taxon>
        <taxon>Thermoproteota</taxon>
        <taxon>Thermoprotei</taxon>
        <taxon>Desulfurococcales</taxon>
        <taxon>Desulfurococcaceae</taxon>
        <taxon>Ignicoccus</taxon>
    </lineage>
</organism>
<accession>A8AA18</accession>
<sequence>MEVPAAWKKFRYRGKTLEELLEMPLDDFIELLPARQRRSLKRGFNDAQRRLLEKVLKARKEMEKGKKVKIRTHVRDMVILPIMVGLTIEVYNGKEFVPVKIVPEMIGHYLGEFSHTTAVVKHGEPGLKATRSSLFVAAK</sequence>
<gene>
    <name evidence="1" type="primary">rps19</name>
    <name type="ordered locus">Igni_0588</name>
</gene>
<proteinExistence type="inferred from homology"/>
<comment type="function">
    <text evidence="1">Protein S19 forms a complex with S13 that binds strongly to the 16S ribosomal RNA.</text>
</comment>
<comment type="similarity">
    <text evidence="1">Belongs to the universal ribosomal protein uS19 family.</text>
</comment>
<dbReference type="EMBL" id="CP000816">
    <property type="protein sequence ID" value="ABU81770.1"/>
    <property type="molecule type" value="Genomic_DNA"/>
</dbReference>
<dbReference type="RefSeq" id="WP_011998622.1">
    <property type="nucleotide sequence ID" value="NC_009776.1"/>
</dbReference>
<dbReference type="SMR" id="A8AA18"/>
<dbReference type="STRING" id="453591.Igni_0588"/>
<dbReference type="GeneID" id="5562735"/>
<dbReference type="KEGG" id="iho:Igni_0588"/>
<dbReference type="eggNOG" id="arCOG04099">
    <property type="taxonomic scope" value="Archaea"/>
</dbReference>
<dbReference type="HOGENOM" id="CLU_097347_1_0_2"/>
<dbReference type="OrthoDB" id="30559at2157"/>
<dbReference type="PhylomeDB" id="A8AA18"/>
<dbReference type="Proteomes" id="UP000000262">
    <property type="component" value="Chromosome"/>
</dbReference>
<dbReference type="GO" id="GO:0022627">
    <property type="term" value="C:cytosolic small ribosomal subunit"/>
    <property type="evidence" value="ECO:0007669"/>
    <property type="project" value="TreeGrafter"/>
</dbReference>
<dbReference type="GO" id="GO:0019843">
    <property type="term" value="F:rRNA binding"/>
    <property type="evidence" value="ECO:0007669"/>
    <property type="project" value="UniProtKB-UniRule"/>
</dbReference>
<dbReference type="GO" id="GO:0003735">
    <property type="term" value="F:structural constituent of ribosome"/>
    <property type="evidence" value="ECO:0007669"/>
    <property type="project" value="InterPro"/>
</dbReference>
<dbReference type="GO" id="GO:0000028">
    <property type="term" value="P:ribosomal small subunit assembly"/>
    <property type="evidence" value="ECO:0007669"/>
    <property type="project" value="TreeGrafter"/>
</dbReference>
<dbReference type="GO" id="GO:0006412">
    <property type="term" value="P:translation"/>
    <property type="evidence" value="ECO:0007669"/>
    <property type="project" value="UniProtKB-UniRule"/>
</dbReference>
<dbReference type="FunFam" id="3.30.860.10:FF:000002">
    <property type="entry name" value="40S ribosomal protein S15"/>
    <property type="match status" value="1"/>
</dbReference>
<dbReference type="Gene3D" id="3.30.860.10">
    <property type="entry name" value="30s Ribosomal Protein S19, Chain A"/>
    <property type="match status" value="1"/>
</dbReference>
<dbReference type="HAMAP" id="MF_00531">
    <property type="entry name" value="Ribosomal_uS19"/>
    <property type="match status" value="1"/>
</dbReference>
<dbReference type="InterPro" id="IPR002222">
    <property type="entry name" value="Ribosomal_uS19"/>
</dbReference>
<dbReference type="InterPro" id="IPR020934">
    <property type="entry name" value="Ribosomal_uS19_CS"/>
</dbReference>
<dbReference type="InterPro" id="IPR005713">
    <property type="entry name" value="Ribosomal_uS19_euk/arc"/>
</dbReference>
<dbReference type="InterPro" id="IPR023575">
    <property type="entry name" value="Ribosomal_uS19_SF"/>
</dbReference>
<dbReference type="NCBIfam" id="NF003121">
    <property type="entry name" value="PRK04038.1"/>
    <property type="match status" value="1"/>
</dbReference>
<dbReference type="NCBIfam" id="TIGR01025">
    <property type="entry name" value="uS19_arch"/>
    <property type="match status" value="1"/>
</dbReference>
<dbReference type="PANTHER" id="PTHR11880">
    <property type="entry name" value="RIBOSOMAL PROTEIN S19P FAMILY MEMBER"/>
    <property type="match status" value="1"/>
</dbReference>
<dbReference type="PANTHER" id="PTHR11880:SF2">
    <property type="entry name" value="SMALL RIBOSOMAL SUBUNIT PROTEIN US19"/>
    <property type="match status" value="1"/>
</dbReference>
<dbReference type="Pfam" id="PF00203">
    <property type="entry name" value="Ribosomal_S19"/>
    <property type="match status" value="1"/>
</dbReference>
<dbReference type="PIRSF" id="PIRSF002144">
    <property type="entry name" value="Ribosomal_S19"/>
    <property type="match status" value="1"/>
</dbReference>
<dbReference type="PRINTS" id="PR00975">
    <property type="entry name" value="RIBOSOMALS19"/>
</dbReference>
<dbReference type="SUPFAM" id="SSF54570">
    <property type="entry name" value="Ribosomal protein S19"/>
    <property type="match status" value="1"/>
</dbReference>
<dbReference type="PROSITE" id="PS00323">
    <property type="entry name" value="RIBOSOMAL_S19"/>
    <property type="match status" value="1"/>
</dbReference>
<reference key="1">
    <citation type="journal article" date="2008" name="Genome Biol.">
        <title>A genomic analysis of the archaeal system Ignicoccus hospitalis-Nanoarchaeum equitans.</title>
        <authorList>
            <person name="Podar M."/>
            <person name="Anderson I."/>
            <person name="Makarova K.S."/>
            <person name="Elkins J.G."/>
            <person name="Ivanova N."/>
            <person name="Wall M.A."/>
            <person name="Lykidis A."/>
            <person name="Mavromatis K."/>
            <person name="Sun H."/>
            <person name="Hudson M.E."/>
            <person name="Chen W."/>
            <person name="Deciu C."/>
            <person name="Hutchison D."/>
            <person name="Eads J.R."/>
            <person name="Anderson A."/>
            <person name="Fernandes F."/>
            <person name="Szeto E."/>
            <person name="Lapidus A."/>
            <person name="Kyrpides N.C."/>
            <person name="Saier M.H. Jr."/>
            <person name="Richardson P.M."/>
            <person name="Rachel R."/>
            <person name="Huber H."/>
            <person name="Eisen J.A."/>
            <person name="Koonin E.V."/>
            <person name="Keller M."/>
            <person name="Stetter K.O."/>
        </authorList>
    </citation>
    <scope>NUCLEOTIDE SEQUENCE [LARGE SCALE GENOMIC DNA]</scope>
    <source>
        <strain>KIN4/I / DSM 18386 / JCM 14125</strain>
    </source>
</reference>
<keyword id="KW-1185">Reference proteome</keyword>
<keyword id="KW-0687">Ribonucleoprotein</keyword>
<keyword id="KW-0689">Ribosomal protein</keyword>
<keyword id="KW-0694">RNA-binding</keyword>
<keyword id="KW-0699">rRNA-binding</keyword>
<evidence type="ECO:0000255" key="1">
    <source>
        <dbReference type="HAMAP-Rule" id="MF_00531"/>
    </source>
</evidence>
<evidence type="ECO:0000305" key="2"/>
<name>RS19_IGNH4</name>
<protein>
    <recommendedName>
        <fullName evidence="1">Small ribosomal subunit protein uS19</fullName>
    </recommendedName>
    <alternativeName>
        <fullName evidence="2">30S ribosomal protein S19</fullName>
    </alternativeName>
</protein>
<feature type="chain" id="PRO_0000354311" description="Small ribosomal subunit protein uS19">
    <location>
        <begin position="1"/>
        <end position="139"/>
    </location>
</feature>